<keyword id="KW-0067">ATP-binding</keyword>
<keyword id="KW-0963">Cytoplasm</keyword>
<keyword id="KW-0436">Ligase</keyword>
<keyword id="KW-0547">Nucleotide-binding</keyword>
<keyword id="KW-0658">Purine biosynthesis</keyword>
<comment type="catalytic activity">
    <reaction evidence="1">
        <text>2-formamido-N(1)-(5-O-phospho-beta-D-ribosyl)acetamidine + ATP = 5-amino-1-(5-phospho-beta-D-ribosyl)imidazole + ADP + phosphate + H(+)</text>
        <dbReference type="Rhea" id="RHEA:23032"/>
        <dbReference type="ChEBI" id="CHEBI:15378"/>
        <dbReference type="ChEBI" id="CHEBI:30616"/>
        <dbReference type="ChEBI" id="CHEBI:43474"/>
        <dbReference type="ChEBI" id="CHEBI:137981"/>
        <dbReference type="ChEBI" id="CHEBI:147287"/>
        <dbReference type="ChEBI" id="CHEBI:456216"/>
        <dbReference type="EC" id="6.3.3.1"/>
    </reaction>
</comment>
<comment type="pathway">
    <text evidence="1">Purine metabolism; IMP biosynthesis via de novo pathway; 5-amino-1-(5-phospho-D-ribosyl)imidazole from N(2)-formyl-N(1)-(5-phospho-D-ribosyl)glycinamide: step 2/2.</text>
</comment>
<comment type="subcellular location">
    <subcellularLocation>
        <location evidence="1">Cytoplasm</location>
    </subcellularLocation>
</comment>
<comment type="similarity">
    <text evidence="1">Belongs to the AIR synthase family.</text>
</comment>
<gene>
    <name evidence="1" type="primary">purM</name>
    <name type="ordered locus">Pmen_2996</name>
</gene>
<name>PUR5_ECTM1</name>
<reference key="1">
    <citation type="submission" date="2007-04" db="EMBL/GenBank/DDBJ databases">
        <title>Complete sequence of Pseudomonas mendocina ymp.</title>
        <authorList>
            <consortium name="US DOE Joint Genome Institute"/>
            <person name="Copeland A."/>
            <person name="Lucas S."/>
            <person name="Lapidus A."/>
            <person name="Barry K."/>
            <person name="Glavina del Rio T."/>
            <person name="Dalin E."/>
            <person name="Tice H."/>
            <person name="Pitluck S."/>
            <person name="Kiss H."/>
            <person name="Brettin T."/>
            <person name="Detter J.C."/>
            <person name="Bruce D."/>
            <person name="Han C."/>
            <person name="Schmutz J."/>
            <person name="Larimer F."/>
            <person name="Land M."/>
            <person name="Hauser L."/>
            <person name="Kyrpides N."/>
            <person name="Mikhailova N."/>
            <person name="Hersman L."/>
            <person name="Dubois J."/>
            <person name="Maurice P."/>
            <person name="Richardson P."/>
        </authorList>
    </citation>
    <scope>NUCLEOTIDE SEQUENCE [LARGE SCALE GENOMIC DNA]</scope>
    <source>
        <strain>ymp</strain>
    </source>
</reference>
<accession>A4XWN5</accession>
<dbReference type="EC" id="6.3.3.1" evidence="1"/>
<dbReference type="EMBL" id="CP000680">
    <property type="protein sequence ID" value="ABP85751.1"/>
    <property type="molecule type" value="Genomic_DNA"/>
</dbReference>
<dbReference type="SMR" id="A4XWN5"/>
<dbReference type="STRING" id="399739.Pmen_2996"/>
<dbReference type="KEGG" id="pmy:Pmen_2996"/>
<dbReference type="PATRIC" id="fig|399739.8.peg.3041"/>
<dbReference type="eggNOG" id="COG0150">
    <property type="taxonomic scope" value="Bacteria"/>
</dbReference>
<dbReference type="HOGENOM" id="CLU_047116_0_0_6"/>
<dbReference type="OrthoDB" id="9777881at2"/>
<dbReference type="UniPathway" id="UPA00074">
    <property type="reaction ID" value="UER00129"/>
</dbReference>
<dbReference type="GO" id="GO:0005829">
    <property type="term" value="C:cytosol"/>
    <property type="evidence" value="ECO:0007669"/>
    <property type="project" value="TreeGrafter"/>
</dbReference>
<dbReference type="GO" id="GO:0005524">
    <property type="term" value="F:ATP binding"/>
    <property type="evidence" value="ECO:0007669"/>
    <property type="project" value="UniProtKB-KW"/>
</dbReference>
<dbReference type="GO" id="GO:0004637">
    <property type="term" value="F:phosphoribosylamine-glycine ligase activity"/>
    <property type="evidence" value="ECO:0007669"/>
    <property type="project" value="TreeGrafter"/>
</dbReference>
<dbReference type="GO" id="GO:0004641">
    <property type="term" value="F:phosphoribosylformylglycinamidine cyclo-ligase activity"/>
    <property type="evidence" value="ECO:0007669"/>
    <property type="project" value="UniProtKB-UniRule"/>
</dbReference>
<dbReference type="GO" id="GO:0006189">
    <property type="term" value="P:'de novo' IMP biosynthetic process"/>
    <property type="evidence" value="ECO:0007669"/>
    <property type="project" value="UniProtKB-UniRule"/>
</dbReference>
<dbReference type="GO" id="GO:0046084">
    <property type="term" value="P:adenine biosynthetic process"/>
    <property type="evidence" value="ECO:0007669"/>
    <property type="project" value="TreeGrafter"/>
</dbReference>
<dbReference type="CDD" id="cd02196">
    <property type="entry name" value="PurM"/>
    <property type="match status" value="1"/>
</dbReference>
<dbReference type="FunFam" id="3.30.1330.10:FF:000001">
    <property type="entry name" value="Phosphoribosylformylglycinamidine cyclo-ligase"/>
    <property type="match status" value="1"/>
</dbReference>
<dbReference type="FunFam" id="3.90.650.10:FF:000001">
    <property type="entry name" value="Phosphoribosylformylglycinamidine cyclo-ligase"/>
    <property type="match status" value="1"/>
</dbReference>
<dbReference type="Gene3D" id="3.90.650.10">
    <property type="entry name" value="PurM-like C-terminal domain"/>
    <property type="match status" value="1"/>
</dbReference>
<dbReference type="Gene3D" id="3.30.1330.10">
    <property type="entry name" value="PurM-like, N-terminal domain"/>
    <property type="match status" value="1"/>
</dbReference>
<dbReference type="HAMAP" id="MF_00741">
    <property type="entry name" value="AIRS"/>
    <property type="match status" value="1"/>
</dbReference>
<dbReference type="InterPro" id="IPR010918">
    <property type="entry name" value="PurM-like_C_dom"/>
</dbReference>
<dbReference type="InterPro" id="IPR036676">
    <property type="entry name" value="PurM-like_C_sf"/>
</dbReference>
<dbReference type="InterPro" id="IPR016188">
    <property type="entry name" value="PurM-like_N"/>
</dbReference>
<dbReference type="InterPro" id="IPR036921">
    <property type="entry name" value="PurM-like_N_sf"/>
</dbReference>
<dbReference type="InterPro" id="IPR004733">
    <property type="entry name" value="PurM_cligase"/>
</dbReference>
<dbReference type="NCBIfam" id="TIGR00878">
    <property type="entry name" value="purM"/>
    <property type="match status" value="1"/>
</dbReference>
<dbReference type="PANTHER" id="PTHR10520:SF12">
    <property type="entry name" value="TRIFUNCTIONAL PURINE BIOSYNTHETIC PROTEIN ADENOSINE-3"/>
    <property type="match status" value="1"/>
</dbReference>
<dbReference type="PANTHER" id="PTHR10520">
    <property type="entry name" value="TRIFUNCTIONAL PURINE BIOSYNTHETIC PROTEIN ADENOSINE-3-RELATED"/>
    <property type="match status" value="1"/>
</dbReference>
<dbReference type="Pfam" id="PF00586">
    <property type="entry name" value="AIRS"/>
    <property type="match status" value="1"/>
</dbReference>
<dbReference type="Pfam" id="PF02769">
    <property type="entry name" value="AIRS_C"/>
    <property type="match status" value="1"/>
</dbReference>
<dbReference type="SUPFAM" id="SSF56042">
    <property type="entry name" value="PurM C-terminal domain-like"/>
    <property type="match status" value="1"/>
</dbReference>
<dbReference type="SUPFAM" id="SSF55326">
    <property type="entry name" value="PurM N-terminal domain-like"/>
    <property type="match status" value="1"/>
</dbReference>
<sequence length="352" mass="36749">MSKQPSISYKDAGVDIDAGEALVERIKGVAKRTARPEVMGGLGGFGALCEIPAGYKQPVLVSGTDGVGTKLRLALNLNKHDSIGQDLVAMCVNDLVVCGAEPLFFLDYYATGKLNVDVAATVVTGIGAGCELAGCSLVGGETAEMPGMYEGEDYDLAGFCVGVVEKSEIIDGSKVATGDALIALPSSGPHSNGYSLIRKIIEVSGADIEQVQLDGKALADLLMAPTRIYVKPLLKLIKDTGAVKAMAHITGGGLLDNIPRVLPQGAQAVIDVASWNRPAVFDWLQEKGNVDEHEMHRVLNCGVGMVICVAQDQVEAALASLRASGESPWVIGQIAEAAEGAAQVQLNNLKTH</sequence>
<feature type="chain" id="PRO_1000046460" description="Phosphoribosylformylglycinamidine cyclo-ligase">
    <location>
        <begin position="1"/>
        <end position="352"/>
    </location>
</feature>
<organism>
    <name type="scientific">Ectopseudomonas mendocina (strain ymp)</name>
    <name type="common">Pseudomonas mendocina</name>
    <dbReference type="NCBI Taxonomy" id="399739"/>
    <lineage>
        <taxon>Bacteria</taxon>
        <taxon>Pseudomonadati</taxon>
        <taxon>Pseudomonadota</taxon>
        <taxon>Gammaproteobacteria</taxon>
        <taxon>Pseudomonadales</taxon>
        <taxon>Pseudomonadaceae</taxon>
        <taxon>Ectopseudomonas</taxon>
    </lineage>
</organism>
<proteinExistence type="inferred from homology"/>
<protein>
    <recommendedName>
        <fullName evidence="1">Phosphoribosylformylglycinamidine cyclo-ligase</fullName>
        <ecNumber evidence="1">6.3.3.1</ecNumber>
    </recommendedName>
    <alternativeName>
        <fullName evidence="1">AIR synthase</fullName>
    </alternativeName>
    <alternativeName>
        <fullName evidence="1">AIRS</fullName>
    </alternativeName>
    <alternativeName>
        <fullName evidence="1">Phosphoribosyl-aminoimidazole synthetase</fullName>
    </alternativeName>
</protein>
<evidence type="ECO:0000255" key="1">
    <source>
        <dbReference type="HAMAP-Rule" id="MF_00741"/>
    </source>
</evidence>